<proteinExistence type="evidence at protein level"/>
<keyword id="KW-0067">ATP-binding</keyword>
<keyword id="KW-0325">Glycoprotein</keyword>
<keyword id="KW-0472">Membrane</keyword>
<keyword id="KW-0547">Nucleotide-binding</keyword>
<keyword id="KW-1185">Reference proteome</keyword>
<keyword id="KW-0677">Repeat</keyword>
<keyword id="KW-0812">Transmembrane</keyword>
<keyword id="KW-1133">Transmembrane helix</keyword>
<keyword id="KW-0813">Transport</keyword>
<gene>
    <name evidence="7" type="primary">ABCB20</name>
    <name evidence="6" type="synonym">MDR14</name>
    <name type="synonym">PGP20</name>
    <name evidence="10" type="ordered locus">At3g55320</name>
    <name evidence="11" type="ORF">T26I12.200</name>
</gene>
<sequence length="1408" mass="155155">MMISRGLFGWSPPHMQPLTPVSEVSEPPESPSPYLDPGAESGGGTGTAAALAEADEEMDDQDELEPPPAAVPFSQLFACADRFDWVLMIVGSVAAAAHGTALIVYLHYFAKIVDVLAFSNDSSQQRSEHQFDRLVQLSLTIVYIAGGVFISGWIEVSCWILTGERQTAVIRSKYVQVLLNQDMSFFDTYGNNGDIVSQVLSDVLLIQSALSEKVGNYIHNMATFISGLVIGFVNCWEIALITLATGPFIVAAGGISNIFLHRLAENIQDAYAEAAGIAEQAISYIRTLYAFTNETLAKYSYATSLQATLRYGILISLVQGLGLGFTYGLAICSCALQLWIGRFFVHNGRANGGEIIAALFAVILSGLGLNQAATNFYSFDQGRIAAYRLFEMITRSSSVANQEGAVLASVQGNIEFRNVYFSYLSRPEIPILSGFYLTVPAKKAVALVGRNGSGKSSIIPLMERFYDPTLGEVLLDGENIKNLKLEWLRSQIGLVTQEPALLSLSIRENIAYGRDATLDQIEEAAKNAHAHTFISSLEKGYETQVGRAGLAMTEEQKIKLSIARAVLLNPTILLLDEVTGGLDFEAERIVQEALDLLMLGRSTIIIARRLSLIKNADYIAVMEEGQLVEMGTHDELINLGGLYAELLKCEEATKLPRRMPVRNYKESAVFEVERDSSAGCGVQEPSSPKMIKSPSLQRGSGVFRPQELCFDTEESPKAHSPASEKTGEDGMSLDCADKEPTIKRQDSFEMRLPHLPKVDVQCPQQKSNGSEPESPVSPLLTSDPKNERSHSQTFSRPLSSPDDTKANGKASKDAQHKESPSFWRLAQLSFPEWLYAVLGSLGAAIFGSFNPLLAYVIALVVTEYYKSKGGHLREEVDKWCLIIACMGIVTVVANFLQHFYFGIMGEKMTERVRRMMFSAMLRNEVGWFDDEENSPDTLSMRLANDATFVRAAFSNRLSIFIQDSFAVIVALLIGLLLGWRLALVALATLPILTLSAIAQKLWLAGFSKGIQEMHRKASLVLEDAVRNIYTVVAFCAGNKVMELYRMQLQRILRQSYLHGMAIGFAFGFSQFLLFACNALLLWCTALSVNRGYMKLSTAITEYMVFSFATFALVEPFGLAPYILKRRKSLISVFEIVDRVPTIEPDDNSALKPPNVYGSIELKNVDFCYPTRPEILVLSNFSLKISGGQTVAVVGVSGSGKSTIISLVERYYDPVAGQVLLDGRDLKLYNLRWLRSHMGLVQQEPIIFSTTIRENIIYARHNASEAEMKEAARIANAHHFISSLPHGYDTHIGMRGVELTPGQKQRIAIARVVLKNAPIILIDEASSSIESESSRVVQEALDTLIMGNKTTILIAHRAAMMRHVDNIVVLNGGRIVEEGTHDSLAAKNGLYVRLMQPHFGKGLRQHRLI</sequence>
<dbReference type="EMBL" id="AL132954">
    <property type="protein sequence ID" value="CAB75766.1"/>
    <property type="molecule type" value="Genomic_DNA"/>
</dbReference>
<dbReference type="EMBL" id="CP002686">
    <property type="protein sequence ID" value="AEE79368.1"/>
    <property type="molecule type" value="Genomic_DNA"/>
</dbReference>
<dbReference type="EMBL" id="AK118406">
    <property type="protein sequence ID" value="BAC43015.1"/>
    <property type="status" value="ALT_INIT"/>
    <property type="molecule type" value="mRNA"/>
</dbReference>
<dbReference type="EMBL" id="BT003695">
    <property type="protein sequence ID" value="AAO39923.1"/>
    <property type="molecule type" value="mRNA"/>
</dbReference>
<dbReference type="PIR" id="T47671">
    <property type="entry name" value="T47671"/>
</dbReference>
<dbReference type="RefSeq" id="NP_191092.1">
    <property type="nucleotide sequence ID" value="NM_115390.3"/>
</dbReference>
<dbReference type="SMR" id="Q9M3B9"/>
<dbReference type="BioGRID" id="10014">
    <property type="interactions" value="1"/>
</dbReference>
<dbReference type="FunCoup" id="Q9M3B9">
    <property type="interactions" value="362"/>
</dbReference>
<dbReference type="STRING" id="3702.Q9M3B9"/>
<dbReference type="GlyCosmos" id="Q9M3B9">
    <property type="glycosylation" value="7 sites, No reported glycans"/>
</dbReference>
<dbReference type="GlyGen" id="Q9M3B9">
    <property type="glycosylation" value="7 sites"/>
</dbReference>
<dbReference type="iPTMnet" id="Q9M3B9"/>
<dbReference type="PaxDb" id="3702-AT3G55320.1"/>
<dbReference type="ProteomicsDB" id="244616"/>
<dbReference type="EnsemblPlants" id="AT3G55320.1">
    <property type="protein sequence ID" value="AT3G55320.1"/>
    <property type="gene ID" value="AT3G55320"/>
</dbReference>
<dbReference type="GeneID" id="824698"/>
<dbReference type="Gramene" id="AT3G55320.1">
    <property type="protein sequence ID" value="AT3G55320.1"/>
    <property type="gene ID" value="AT3G55320"/>
</dbReference>
<dbReference type="KEGG" id="ath:AT3G55320"/>
<dbReference type="Araport" id="AT3G55320"/>
<dbReference type="TAIR" id="AT3G55320">
    <property type="gene designation" value="ABCB20"/>
</dbReference>
<dbReference type="eggNOG" id="KOG0055">
    <property type="taxonomic scope" value="Eukaryota"/>
</dbReference>
<dbReference type="HOGENOM" id="CLU_000604_17_2_1"/>
<dbReference type="InParanoid" id="Q9M3B9"/>
<dbReference type="OMA" id="PEKMVEN"/>
<dbReference type="PhylomeDB" id="Q9M3B9"/>
<dbReference type="BioCyc" id="ARA:AT3G55320-MONOMER"/>
<dbReference type="PRO" id="PR:Q9M3B9"/>
<dbReference type="Proteomes" id="UP000006548">
    <property type="component" value="Chromosome 3"/>
</dbReference>
<dbReference type="ExpressionAtlas" id="Q9M3B9">
    <property type="expression patterns" value="baseline and differential"/>
</dbReference>
<dbReference type="GO" id="GO:0005829">
    <property type="term" value="C:cytosol"/>
    <property type="evidence" value="ECO:0007005"/>
    <property type="project" value="TAIR"/>
</dbReference>
<dbReference type="GO" id="GO:0016020">
    <property type="term" value="C:membrane"/>
    <property type="evidence" value="ECO:0007669"/>
    <property type="project" value="UniProtKB-SubCell"/>
</dbReference>
<dbReference type="GO" id="GO:0140359">
    <property type="term" value="F:ABC-type transporter activity"/>
    <property type="evidence" value="ECO:0007669"/>
    <property type="project" value="InterPro"/>
</dbReference>
<dbReference type="GO" id="GO:0005524">
    <property type="term" value="F:ATP binding"/>
    <property type="evidence" value="ECO:0007669"/>
    <property type="project" value="UniProtKB-KW"/>
</dbReference>
<dbReference type="GO" id="GO:0016887">
    <property type="term" value="F:ATP hydrolysis activity"/>
    <property type="evidence" value="ECO:0007669"/>
    <property type="project" value="InterPro"/>
</dbReference>
<dbReference type="CDD" id="cd18577">
    <property type="entry name" value="ABC_6TM_Pgp_ABCB1_D1_like"/>
    <property type="match status" value="1"/>
</dbReference>
<dbReference type="CDD" id="cd18578">
    <property type="entry name" value="ABC_6TM_Pgp_ABCB1_D2_like"/>
    <property type="match status" value="1"/>
</dbReference>
<dbReference type="FunFam" id="1.20.1560.10:FF:000028">
    <property type="entry name" value="ABC transporter B family member 20"/>
    <property type="match status" value="1"/>
</dbReference>
<dbReference type="FunFam" id="3.40.50.300:FF:000240">
    <property type="entry name" value="ABC transporter B family member 20"/>
    <property type="match status" value="1"/>
</dbReference>
<dbReference type="FunFam" id="3.40.50.300:FF:001683">
    <property type="entry name" value="ABC transporter B family member 20"/>
    <property type="match status" value="1"/>
</dbReference>
<dbReference type="FunFam" id="1.20.1560.10:FF:000021">
    <property type="entry name" value="ABC transporter B family member 6"/>
    <property type="match status" value="1"/>
</dbReference>
<dbReference type="FunFam" id="1.20.1560.10:FF:000049">
    <property type="entry name" value="ABC transporter B family member 6"/>
    <property type="match status" value="1"/>
</dbReference>
<dbReference type="Gene3D" id="1.20.1560.10">
    <property type="entry name" value="ABC transporter type 1, transmembrane domain"/>
    <property type="match status" value="3"/>
</dbReference>
<dbReference type="Gene3D" id="3.40.50.300">
    <property type="entry name" value="P-loop containing nucleotide triphosphate hydrolases"/>
    <property type="match status" value="2"/>
</dbReference>
<dbReference type="InterPro" id="IPR003593">
    <property type="entry name" value="AAA+_ATPase"/>
</dbReference>
<dbReference type="InterPro" id="IPR011527">
    <property type="entry name" value="ABC1_TM_dom"/>
</dbReference>
<dbReference type="InterPro" id="IPR036640">
    <property type="entry name" value="ABC1_TM_sf"/>
</dbReference>
<dbReference type="InterPro" id="IPR003439">
    <property type="entry name" value="ABC_transporter-like_ATP-bd"/>
</dbReference>
<dbReference type="InterPro" id="IPR027417">
    <property type="entry name" value="P-loop_NTPase"/>
</dbReference>
<dbReference type="InterPro" id="IPR039421">
    <property type="entry name" value="Type_1_exporter"/>
</dbReference>
<dbReference type="PANTHER" id="PTHR24222">
    <property type="entry name" value="ABC TRANSPORTER B FAMILY"/>
    <property type="match status" value="1"/>
</dbReference>
<dbReference type="PANTHER" id="PTHR24222:SF52">
    <property type="entry name" value="ABC TRANSPORTER B FAMILY MEMBER 20-RELATED"/>
    <property type="match status" value="1"/>
</dbReference>
<dbReference type="Pfam" id="PF00664">
    <property type="entry name" value="ABC_membrane"/>
    <property type="match status" value="2"/>
</dbReference>
<dbReference type="Pfam" id="PF00005">
    <property type="entry name" value="ABC_tran"/>
    <property type="match status" value="2"/>
</dbReference>
<dbReference type="SMART" id="SM00382">
    <property type="entry name" value="AAA"/>
    <property type="match status" value="2"/>
</dbReference>
<dbReference type="SUPFAM" id="SSF90123">
    <property type="entry name" value="ABC transporter transmembrane region"/>
    <property type="match status" value="2"/>
</dbReference>
<dbReference type="SUPFAM" id="SSF52540">
    <property type="entry name" value="P-loop containing nucleoside triphosphate hydrolases"/>
    <property type="match status" value="2"/>
</dbReference>
<dbReference type="PROSITE" id="PS50929">
    <property type="entry name" value="ABC_TM1F"/>
    <property type="match status" value="2"/>
</dbReference>
<dbReference type="PROSITE" id="PS50893">
    <property type="entry name" value="ABC_TRANSPORTER_2"/>
    <property type="match status" value="2"/>
</dbReference>
<protein>
    <recommendedName>
        <fullName evidence="7">ABC transporter B family member 20</fullName>
        <shortName evidence="7">ABC transporter ABCB.20</shortName>
        <shortName evidence="7">AtABCB20</shortName>
    </recommendedName>
    <alternativeName>
        <fullName evidence="6">Multidrug resistance protein 14</fullName>
        <shortName evidence="6">AtMDR14</shortName>
    </alternativeName>
    <alternativeName>
        <fullName>P-glycoprotein 20</fullName>
    </alternativeName>
    <alternativeName>
        <fullName evidence="9">Probable auxin exporter ABCB20</fullName>
    </alternativeName>
</protein>
<accession>Q9M3B9</accession>
<accession>Q8GX68</accession>
<feature type="chain" id="PRO_0000227925" description="ABC transporter B family member 20">
    <location>
        <begin position="1"/>
        <end position="1408"/>
    </location>
</feature>
<feature type="transmembrane region" description="Helical" evidence="2">
    <location>
        <begin position="86"/>
        <end position="106"/>
    </location>
</feature>
<feature type="transmembrane region" description="Helical" evidence="2">
    <location>
        <begin position="141"/>
        <end position="161"/>
    </location>
</feature>
<feature type="transmembrane region" description="Helical" evidence="2">
    <location>
        <begin position="214"/>
        <end position="233"/>
    </location>
</feature>
<feature type="transmembrane region" description="Helical" evidence="2">
    <location>
        <begin position="238"/>
        <end position="260"/>
    </location>
</feature>
<feature type="transmembrane region" description="Helical" evidence="2">
    <location>
        <begin position="312"/>
        <end position="332"/>
    </location>
</feature>
<feature type="transmembrane region" description="Helical" evidence="2">
    <location>
        <begin position="353"/>
        <end position="373"/>
    </location>
</feature>
<feature type="transmembrane region" description="Helical" evidence="2">
    <location>
        <begin position="841"/>
        <end position="861"/>
    </location>
</feature>
<feature type="transmembrane region" description="Helical" evidence="2">
    <location>
        <begin position="881"/>
        <end position="901"/>
    </location>
</feature>
<feature type="transmembrane region" description="Helical" evidence="2">
    <location>
        <begin position="959"/>
        <end position="979"/>
    </location>
</feature>
<feature type="transmembrane region" description="Helical" evidence="2">
    <location>
        <begin position="983"/>
        <end position="1003"/>
    </location>
</feature>
<feature type="transmembrane region" description="Helical" evidence="2">
    <location>
        <begin position="1062"/>
        <end position="1082"/>
    </location>
</feature>
<feature type="transmembrane region" description="Helical" evidence="2">
    <location>
        <begin position="1103"/>
        <end position="1123"/>
    </location>
</feature>
<feature type="domain" description="ABC transmembrane type-1 1" evidence="2">
    <location>
        <begin position="88"/>
        <end position="381"/>
    </location>
</feature>
<feature type="domain" description="ABC transporter 1" evidence="1">
    <location>
        <begin position="414"/>
        <end position="649"/>
    </location>
</feature>
<feature type="domain" description="ABC transmembrane type-1 2" evidence="2">
    <location>
        <begin position="836"/>
        <end position="1124"/>
    </location>
</feature>
<feature type="domain" description="ABC transporter 2" evidence="1">
    <location>
        <begin position="1159"/>
        <end position="1396"/>
    </location>
</feature>
<feature type="region of interest" description="Disordered" evidence="4">
    <location>
        <begin position="14"/>
        <end position="49"/>
    </location>
</feature>
<feature type="region of interest" description="Disordered" evidence="4">
    <location>
        <begin position="676"/>
        <end position="735"/>
    </location>
</feature>
<feature type="region of interest" description="Disordered" evidence="4">
    <location>
        <begin position="752"/>
        <end position="816"/>
    </location>
</feature>
<feature type="compositionally biased region" description="Low complexity" evidence="4">
    <location>
        <begin position="20"/>
        <end position="39"/>
    </location>
</feature>
<feature type="compositionally biased region" description="Polar residues" evidence="4">
    <location>
        <begin position="762"/>
        <end position="771"/>
    </location>
</feature>
<feature type="compositionally biased region" description="Basic and acidic residues" evidence="4">
    <location>
        <begin position="802"/>
        <end position="816"/>
    </location>
</feature>
<feature type="binding site" evidence="1">
    <location>
        <begin position="449"/>
        <end position="456"/>
    </location>
    <ligand>
        <name>ATP</name>
        <dbReference type="ChEBI" id="CHEBI:30616"/>
        <label>1</label>
    </ligand>
</feature>
<feature type="binding site" evidence="1">
    <location>
        <begin position="1194"/>
        <end position="1201"/>
    </location>
    <ligand>
        <name>ATP</name>
        <dbReference type="ChEBI" id="CHEBI:30616"/>
        <label>2</label>
    </ligand>
</feature>
<feature type="glycosylation site" description="N-linked (GlcNAc...) asparagine" evidence="3">
    <location>
        <position position="120"/>
    </location>
</feature>
<feature type="glycosylation site" description="N-linked (GlcNAc...) asparagine" evidence="3">
    <location>
        <position position="293"/>
    </location>
</feature>
<feature type="glycosylation site" description="N-linked (GlcNAc...) asparagine" evidence="3">
    <location>
        <position position="451"/>
    </location>
</feature>
<feature type="glycosylation site" description="N-linked (GlcNAc...) asparagine" evidence="3">
    <location>
        <position position="768"/>
    </location>
</feature>
<feature type="glycosylation site" description="N-linked (GlcNAc...) asparagine" evidence="3">
    <location>
        <position position="1179"/>
    </location>
</feature>
<feature type="glycosylation site" description="N-linked (GlcNAc...) asparagine" evidence="3">
    <location>
        <position position="1261"/>
    </location>
</feature>
<feature type="glycosylation site" description="N-linked (GlcNAc...) asparagine" evidence="3">
    <location>
        <position position="1347"/>
    </location>
</feature>
<reference key="1">
    <citation type="journal article" date="2000" name="Nature">
        <title>Sequence and analysis of chromosome 3 of the plant Arabidopsis thaliana.</title>
        <authorList>
            <person name="Salanoubat M."/>
            <person name="Lemcke K."/>
            <person name="Rieger M."/>
            <person name="Ansorge W."/>
            <person name="Unseld M."/>
            <person name="Fartmann B."/>
            <person name="Valle G."/>
            <person name="Bloecker H."/>
            <person name="Perez-Alonso M."/>
            <person name="Obermaier B."/>
            <person name="Delseny M."/>
            <person name="Boutry M."/>
            <person name="Grivell L.A."/>
            <person name="Mache R."/>
            <person name="Puigdomenech P."/>
            <person name="De Simone V."/>
            <person name="Choisne N."/>
            <person name="Artiguenave F."/>
            <person name="Robert C."/>
            <person name="Brottier P."/>
            <person name="Wincker P."/>
            <person name="Cattolico L."/>
            <person name="Weissenbach J."/>
            <person name="Saurin W."/>
            <person name="Quetier F."/>
            <person name="Schaefer M."/>
            <person name="Mueller-Auer S."/>
            <person name="Gabel C."/>
            <person name="Fuchs M."/>
            <person name="Benes V."/>
            <person name="Wurmbach E."/>
            <person name="Drzonek H."/>
            <person name="Erfle H."/>
            <person name="Jordan N."/>
            <person name="Bangert S."/>
            <person name="Wiedelmann R."/>
            <person name="Kranz H."/>
            <person name="Voss H."/>
            <person name="Holland R."/>
            <person name="Brandt P."/>
            <person name="Nyakatura G."/>
            <person name="Vezzi A."/>
            <person name="D'Angelo M."/>
            <person name="Pallavicini A."/>
            <person name="Toppo S."/>
            <person name="Simionati B."/>
            <person name="Conrad A."/>
            <person name="Hornischer K."/>
            <person name="Kauer G."/>
            <person name="Loehnert T.-H."/>
            <person name="Nordsiek G."/>
            <person name="Reichelt J."/>
            <person name="Scharfe M."/>
            <person name="Schoen O."/>
            <person name="Bargues M."/>
            <person name="Terol J."/>
            <person name="Climent J."/>
            <person name="Navarro P."/>
            <person name="Collado C."/>
            <person name="Perez-Perez A."/>
            <person name="Ottenwaelder B."/>
            <person name="Duchemin D."/>
            <person name="Cooke R."/>
            <person name="Laudie M."/>
            <person name="Berger-Llauro C."/>
            <person name="Purnelle B."/>
            <person name="Masuy D."/>
            <person name="de Haan M."/>
            <person name="Maarse A.C."/>
            <person name="Alcaraz J.-P."/>
            <person name="Cottet A."/>
            <person name="Casacuberta E."/>
            <person name="Monfort A."/>
            <person name="Argiriou A."/>
            <person name="Flores M."/>
            <person name="Liguori R."/>
            <person name="Vitale D."/>
            <person name="Mannhaupt G."/>
            <person name="Haase D."/>
            <person name="Schoof H."/>
            <person name="Rudd S."/>
            <person name="Zaccaria P."/>
            <person name="Mewes H.-W."/>
            <person name="Mayer K.F.X."/>
            <person name="Kaul S."/>
            <person name="Town C.D."/>
            <person name="Koo H.L."/>
            <person name="Tallon L.J."/>
            <person name="Jenkins J."/>
            <person name="Rooney T."/>
            <person name="Rizzo M."/>
            <person name="Walts A."/>
            <person name="Utterback T."/>
            <person name="Fujii C.Y."/>
            <person name="Shea T.P."/>
            <person name="Creasy T.H."/>
            <person name="Haas B."/>
            <person name="Maiti R."/>
            <person name="Wu D."/>
            <person name="Peterson J."/>
            <person name="Van Aken S."/>
            <person name="Pai G."/>
            <person name="Militscher J."/>
            <person name="Sellers P."/>
            <person name="Gill J.E."/>
            <person name="Feldblyum T.V."/>
            <person name="Preuss D."/>
            <person name="Lin X."/>
            <person name="Nierman W.C."/>
            <person name="Salzberg S.L."/>
            <person name="White O."/>
            <person name="Venter J.C."/>
            <person name="Fraser C.M."/>
            <person name="Kaneko T."/>
            <person name="Nakamura Y."/>
            <person name="Sato S."/>
            <person name="Kato T."/>
            <person name="Asamizu E."/>
            <person name="Sasamoto S."/>
            <person name="Kimura T."/>
            <person name="Idesawa K."/>
            <person name="Kawashima K."/>
            <person name="Kishida Y."/>
            <person name="Kiyokawa C."/>
            <person name="Kohara M."/>
            <person name="Matsumoto M."/>
            <person name="Matsuno A."/>
            <person name="Muraki A."/>
            <person name="Nakayama S."/>
            <person name="Nakazaki N."/>
            <person name="Shinpo S."/>
            <person name="Takeuchi C."/>
            <person name="Wada T."/>
            <person name="Watanabe A."/>
            <person name="Yamada M."/>
            <person name="Yasuda M."/>
            <person name="Tabata S."/>
        </authorList>
    </citation>
    <scope>NUCLEOTIDE SEQUENCE [LARGE SCALE GENOMIC DNA]</scope>
    <source>
        <strain>cv. Columbia</strain>
    </source>
</reference>
<reference key="2">
    <citation type="journal article" date="2017" name="Plant J.">
        <title>Araport11: a complete reannotation of the Arabidopsis thaliana reference genome.</title>
        <authorList>
            <person name="Cheng C.Y."/>
            <person name="Krishnakumar V."/>
            <person name="Chan A.P."/>
            <person name="Thibaud-Nissen F."/>
            <person name="Schobel S."/>
            <person name="Town C.D."/>
        </authorList>
    </citation>
    <scope>GENOME REANNOTATION</scope>
    <source>
        <strain>cv. Columbia</strain>
    </source>
</reference>
<reference key="3">
    <citation type="journal article" date="2002" name="Science">
        <title>Functional annotation of a full-length Arabidopsis cDNA collection.</title>
        <authorList>
            <person name="Seki M."/>
            <person name="Narusaka M."/>
            <person name="Kamiya A."/>
            <person name="Ishida J."/>
            <person name="Satou M."/>
            <person name="Sakurai T."/>
            <person name="Nakajima M."/>
            <person name="Enju A."/>
            <person name="Akiyama K."/>
            <person name="Oono Y."/>
            <person name="Muramatsu M."/>
            <person name="Hayashizaki Y."/>
            <person name="Kawai J."/>
            <person name="Carninci P."/>
            <person name="Itoh M."/>
            <person name="Ishii Y."/>
            <person name="Arakawa T."/>
            <person name="Shibata K."/>
            <person name="Shinagawa A."/>
            <person name="Shinozaki K."/>
        </authorList>
    </citation>
    <scope>NUCLEOTIDE SEQUENCE [LARGE SCALE MRNA] OF 1234-1408</scope>
    <source>
        <strain>cv. Columbia</strain>
    </source>
</reference>
<reference key="4">
    <citation type="journal article" date="2003" name="Science">
        <title>Empirical analysis of transcriptional activity in the Arabidopsis genome.</title>
        <authorList>
            <person name="Yamada K."/>
            <person name="Lim J."/>
            <person name="Dale J.M."/>
            <person name="Chen H."/>
            <person name="Shinn P."/>
            <person name="Palm C.J."/>
            <person name="Southwick A.M."/>
            <person name="Wu H.C."/>
            <person name="Kim C.J."/>
            <person name="Nguyen M."/>
            <person name="Pham P.K."/>
            <person name="Cheuk R.F."/>
            <person name="Karlin-Newmann G."/>
            <person name="Liu S.X."/>
            <person name="Lam B."/>
            <person name="Sakano H."/>
            <person name="Wu T."/>
            <person name="Yu G."/>
            <person name="Miranda M."/>
            <person name="Quach H.L."/>
            <person name="Tripp M."/>
            <person name="Chang C.H."/>
            <person name="Lee J.M."/>
            <person name="Toriumi M.J."/>
            <person name="Chan M.M."/>
            <person name="Tang C.C."/>
            <person name="Onodera C.S."/>
            <person name="Deng J.M."/>
            <person name="Akiyama K."/>
            <person name="Ansari Y."/>
            <person name="Arakawa T."/>
            <person name="Banh J."/>
            <person name="Banno F."/>
            <person name="Bowser L."/>
            <person name="Brooks S.Y."/>
            <person name="Carninci P."/>
            <person name="Chao Q."/>
            <person name="Choy N."/>
            <person name="Enju A."/>
            <person name="Goldsmith A.D."/>
            <person name="Gurjal M."/>
            <person name="Hansen N.F."/>
            <person name="Hayashizaki Y."/>
            <person name="Johnson-Hopson C."/>
            <person name="Hsuan V.W."/>
            <person name="Iida K."/>
            <person name="Karnes M."/>
            <person name="Khan S."/>
            <person name="Koesema E."/>
            <person name="Ishida J."/>
            <person name="Jiang P.X."/>
            <person name="Jones T."/>
            <person name="Kawai J."/>
            <person name="Kamiya A."/>
            <person name="Meyers C."/>
            <person name="Nakajima M."/>
            <person name="Narusaka M."/>
            <person name="Seki M."/>
            <person name="Sakurai T."/>
            <person name="Satou M."/>
            <person name="Tamse R."/>
            <person name="Vaysberg M."/>
            <person name="Wallender E.K."/>
            <person name="Wong C."/>
            <person name="Yamamura Y."/>
            <person name="Yuan S."/>
            <person name="Shinozaki K."/>
            <person name="Davis R.W."/>
            <person name="Theologis A."/>
            <person name="Ecker J.R."/>
        </authorList>
    </citation>
    <scope>NUCLEOTIDE SEQUENCE [LARGE SCALE MRNA] OF 1237-1408</scope>
    <source>
        <strain>cv. Columbia</strain>
    </source>
</reference>
<reference key="5">
    <citation type="journal article" date="2001" name="J. Biol. Chem.">
        <title>The Arabidopsis thaliana ABC protein superfamily, a complete inventory.</title>
        <authorList>
            <person name="Sanchez-Fernandez R."/>
            <person name="Davies T.G."/>
            <person name="Coleman J.O."/>
            <person name="Rea P.A."/>
        </authorList>
    </citation>
    <scope>GENE FAMILY</scope>
    <scope>NOMENCLATURE</scope>
</reference>
<reference key="6">
    <citation type="journal article" date="2008" name="Trends Plant Sci.">
        <title>Plant ABC proteins - a unified nomenclature and updated inventory.</title>
        <authorList>
            <person name="Verrier P.J."/>
            <person name="Bird D."/>
            <person name="Burla B."/>
            <person name="Dassa E."/>
            <person name="Forestier C."/>
            <person name="Geisler M."/>
            <person name="Klein M."/>
            <person name="Kolukisaoglu H.U."/>
            <person name="Lee Y."/>
            <person name="Martinoia E."/>
            <person name="Murphy A."/>
            <person name="Rea P.A."/>
            <person name="Samuels L."/>
            <person name="Schulz B."/>
            <person name="Spalding E.J."/>
            <person name="Yazaki K."/>
            <person name="Theodoulou F.L."/>
        </authorList>
    </citation>
    <scope>GENE FAMILY</scope>
    <scope>NOMENCLATURE</scope>
</reference>
<reference key="7">
    <citation type="journal article" date="2009" name="Plant Physiol.">
        <title>Large-scale Arabidopsis phosphoproteome profiling reveals novel chloroplast kinase substrates and phosphorylation networks.</title>
        <authorList>
            <person name="Reiland S."/>
            <person name="Messerli G."/>
            <person name="Baerenfaller K."/>
            <person name="Gerrits B."/>
            <person name="Endler A."/>
            <person name="Grossmann J."/>
            <person name="Gruissem W."/>
            <person name="Baginsky S."/>
        </authorList>
    </citation>
    <scope>IDENTIFICATION BY MASS SPECTROMETRY [LARGE SCALE ANALYSIS]</scope>
</reference>
<reference key="8">
    <citation type="journal article" date="2022" name="Front. Plant Sci.">
        <title>Loss of multiple ABCB auxin transporters recapitulates the major twisted dwarf 1 phenotypes in Arabidopsis thaliana.</title>
        <authorList>
            <person name="Jenness M.K."/>
            <person name="Tayengwa R."/>
            <person name="Bate G.A."/>
            <person name="Tapken W."/>
            <person name="Zhang Y."/>
            <person name="Pang C."/>
            <person name="Murphy A.S."/>
        </authorList>
    </citation>
    <scope>FUNCTION</scope>
    <scope>DISRUPTION PHENOTYPE</scope>
    <scope>TISSUE SPECIFICITY</scope>
    <scope>TRANSPORTER ACTIVITY</scope>
    <source>
        <strain>cv. Columbia</strain>
    </source>
</reference>
<name>AB20B_ARATH</name>
<comment type="function">
    <text evidence="5">Probable auxin efflux transporter that contributes, together with ABCB6 and in a FKBP42/TWD1-dependent manner, to the regulation of leaf position and morphology, internode distribution, roots development, and inflorescence organization, probably by modulating auxin repartition.</text>
</comment>
<comment type="catalytic activity">
    <reaction evidence="9">
        <text>(indol-3-yl)acetate(in) + ATP + H2O = (indol-3-yl)acetate(out) + ADP + phosphate + H(+)</text>
        <dbReference type="Rhea" id="RHEA:84235"/>
        <dbReference type="ChEBI" id="CHEBI:15377"/>
        <dbReference type="ChEBI" id="CHEBI:15378"/>
        <dbReference type="ChEBI" id="CHEBI:30616"/>
        <dbReference type="ChEBI" id="CHEBI:30854"/>
        <dbReference type="ChEBI" id="CHEBI:43474"/>
        <dbReference type="ChEBI" id="CHEBI:456216"/>
    </reaction>
    <physiologicalReaction direction="left-to-right" evidence="9">
        <dbReference type="Rhea" id="RHEA:84236"/>
    </physiologicalReaction>
</comment>
<comment type="subcellular location">
    <subcellularLocation>
        <location evidence="2">Membrane</location>
        <topology evidence="2">Multi-pass membrane protein</topology>
    </subcellularLocation>
</comment>
<comment type="tissue specificity">
    <text evidence="5">Expressed in aerial tissues.</text>
</comment>
<comment type="disruption phenotype">
    <text evidence="5">The abcb6 abcb20 double mutant exhibits compact rosettes that twist laterally and bow, showing increased leaf down curling and wrinkling, along with twisted inflorescence stems, twisted siliques, lateral organ separation defects, reduced internode lengths, and fewer secondary inflorescences (PubMed:35528937). In abcb6 abcb20 double mutant, roots are short and twisted (PubMed:35528937). All torsion phenotypes are associated with reduced auxin levels and reversed by auxin efflux inhibition with 1-naphthylphthalamic acid (NPA) (PubMed:35528937).</text>
</comment>
<comment type="similarity">
    <text evidence="8">Belongs to the ABC transporter superfamily. ABCB family. Multidrug resistance exporter (TC 3.A.1.201) subfamily.</text>
</comment>
<comment type="sequence caution" evidence="8">
    <conflict type="erroneous initiation">
        <sequence resource="EMBL-CDS" id="BAC43015"/>
    </conflict>
    <text>Truncated N-terminus.</text>
</comment>
<evidence type="ECO:0000255" key="1">
    <source>
        <dbReference type="PROSITE-ProRule" id="PRU00434"/>
    </source>
</evidence>
<evidence type="ECO:0000255" key="2">
    <source>
        <dbReference type="PROSITE-ProRule" id="PRU00441"/>
    </source>
</evidence>
<evidence type="ECO:0000255" key="3">
    <source>
        <dbReference type="PROSITE-ProRule" id="PRU00498"/>
    </source>
</evidence>
<evidence type="ECO:0000256" key="4">
    <source>
        <dbReference type="SAM" id="MobiDB-lite"/>
    </source>
</evidence>
<evidence type="ECO:0000269" key="5">
    <source>
    </source>
</evidence>
<evidence type="ECO:0000303" key="6">
    <source>
    </source>
</evidence>
<evidence type="ECO:0000303" key="7">
    <source>
    </source>
</evidence>
<evidence type="ECO:0000305" key="8"/>
<evidence type="ECO:0000305" key="9">
    <source>
    </source>
</evidence>
<evidence type="ECO:0000312" key="10">
    <source>
        <dbReference type="Araport" id="AT3G55320"/>
    </source>
</evidence>
<evidence type="ECO:0000312" key="11">
    <source>
        <dbReference type="EMBL" id="CAB75766.1"/>
    </source>
</evidence>
<organism>
    <name type="scientific">Arabidopsis thaliana</name>
    <name type="common">Mouse-ear cress</name>
    <dbReference type="NCBI Taxonomy" id="3702"/>
    <lineage>
        <taxon>Eukaryota</taxon>
        <taxon>Viridiplantae</taxon>
        <taxon>Streptophyta</taxon>
        <taxon>Embryophyta</taxon>
        <taxon>Tracheophyta</taxon>
        <taxon>Spermatophyta</taxon>
        <taxon>Magnoliopsida</taxon>
        <taxon>eudicotyledons</taxon>
        <taxon>Gunneridae</taxon>
        <taxon>Pentapetalae</taxon>
        <taxon>rosids</taxon>
        <taxon>malvids</taxon>
        <taxon>Brassicales</taxon>
        <taxon>Brassicaceae</taxon>
        <taxon>Camelineae</taxon>
        <taxon>Arabidopsis</taxon>
    </lineage>
</organism>